<proteinExistence type="inferred from homology"/>
<organism>
    <name type="scientific">Legionella pneumophila (strain Lens)</name>
    <dbReference type="NCBI Taxonomy" id="297245"/>
    <lineage>
        <taxon>Bacteria</taxon>
        <taxon>Pseudomonadati</taxon>
        <taxon>Pseudomonadota</taxon>
        <taxon>Gammaproteobacteria</taxon>
        <taxon>Legionellales</taxon>
        <taxon>Legionellaceae</taxon>
        <taxon>Legionella</taxon>
    </lineage>
</organism>
<comment type="function">
    <text evidence="1">Specifically methylates guanosine-37 in various tRNAs.</text>
</comment>
<comment type="catalytic activity">
    <reaction evidence="1">
        <text>guanosine(37) in tRNA + S-adenosyl-L-methionine = N(1)-methylguanosine(37) in tRNA + S-adenosyl-L-homocysteine + H(+)</text>
        <dbReference type="Rhea" id="RHEA:36899"/>
        <dbReference type="Rhea" id="RHEA-COMP:10145"/>
        <dbReference type="Rhea" id="RHEA-COMP:10147"/>
        <dbReference type="ChEBI" id="CHEBI:15378"/>
        <dbReference type="ChEBI" id="CHEBI:57856"/>
        <dbReference type="ChEBI" id="CHEBI:59789"/>
        <dbReference type="ChEBI" id="CHEBI:73542"/>
        <dbReference type="ChEBI" id="CHEBI:74269"/>
        <dbReference type="EC" id="2.1.1.228"/>
    </reaction>
</comment>
<comment type="subunit">
    <text evidence="1">Homodimer.</text>
</comment>
<comment type="subcellular location">
    <subcellularLocation>
        <location evidence="1">Cytoplasm</location>
    </subcellularLocation>
</comment>
<comment type="similarity">
    <text evidence="1">Belongs to the RNA methyltransferase TrmD family.</text>
</comment>
<feature type="chain" id="PRO_0000060395" description="tRNA (guanine-N(1)-)-methyltransferase">
    <location>
        <begin position="1"/>
        <end position="250"/>
    </location>
</feature>
<feature type="binding site" evidence="1">
    <location>
        <position position="115"/>
    </location>
    <ligand>
        <name>S-adenosyl-L-methionine</name>
        <dbReference type="ChEBI" id="CHEBI:59789"/>
    </ligand>
</feature>
<feature type="binding site" evidence="1">
    <location>
        <begin position="135"/>
        <end position="140"/>
    </location>
    <ligand>
        <name>S-adenosyl-L-methionine</name>
        <dbReference type="ChEBI" id="CHEBI:59789"/>
    </ligand>
</feature>
<protein>
    <recommendedName>
        <fullName evidence="1">tRNA (guanine-N(1)-)-methyltransferase</fullName>
        <ecNumber evidence="1">2.1.1.228</ecNumber>
    </recommendedName>
    <alternativeName>
        <fullName evidence="1">M1G-methyltransferase</fullName>
    </alternativeName>
    <alternativeName>
        <fullName evidence="1">tRNA [GM37] methyltransferase</fullName>
    </alternativeName>
</protein>
<gene>
    <name evidence="1" type="primary">trmD</name>
    <name type="ordered locus">lpl0440</name>
</gene>
<evidence type="ECO:0000255" key="1">
    <source>
        <dbReference type="HAMAP-Rule" id="MF_00605"/>
    </source>
</evidence>
<sequence length="250" mass="27988">MALHLGIITLLPEIIQGIHYGVTGRAIEQGLVKIDCWNPRDWSSRPYKQVDDKPYGGGPGMVIMYEPLHAAIKHARSEMKENCKTIYLSPQGKVVRQNDLKQIAAQKQSLLFVAGRYEGIDERIISHHVDEEWSLGDFVLSGGELAAMVFIDAIIRLIPGSLGHLGSAVQDSFMNGLLDCPHYTRPATINGLDVPDVLLGGNHKEIERWRRKQSLGKTWLKRPDLLEKVQLSETDKQLLAEFKCEHGDSC</sequence>
<dbReference type="EC" id="2.1.1.228" evidence="1"/>
<dbReference type="EMBL" id="CR628337">
    <property type="protein sequence ID" value="CAH14670.1"/>
    <property type="molecule type" value="Genomic_DNA"/>
</dbReference>
<dbReference type="RefSeq" id="WP_011214665.1">
    <property type="nucleotide sequence ID" value="NC_006369.1"/>
</dbReference>
<dbReference type="SMR" id="Q5WZE2"/>
<dbReference type="KEGG" id="lpf:lpl0440"/>
<dbReference type="LegioList" id="lpl0440"/>
<dbReference type="HOGENOM" id="CLU_047363_0_1_6"/>
<dbReference type="Proteomes" id="UP000002517">
    <property type="component" value="Chromosome"/>
</dbReference>
<dbReference type="GO" id="GO:0005829">
    <property type="term" value="C:cytosol"/>
    <property type="evidence" value="ECO:0007669"/>
    <property type="project" value="TreeGrafter"/>
</dbReference>
<dbReference type="GO" id="GO:0052906">
    <property type="term" value="F:tRNA (guanine(37)-N1)-methyltransferase activity"/>
    <property type="evidence" value="ECO:0007669"/>
    <property type="project" value="UniProtKB-UniRule"/>
</dbReference>
<dbReference type="GO" id="GO:0002939">
    <property type="term" value="P:tRNA N1-guanine methylation"/>
    <property type="evidence" value="ECO:0007669"/>
    <property type="project" value="TreeGrafter"/>
</dbReference>
<dbReference type="CDD" id="cd18080">
    <property type="entry name" value="TrmD-like"/>
    <property type="match status" value="1"/>
</dbReference>
<dbReference type="FunFam" id="1.10.1270.20:FF:000001">
    <property type="entry name" value="tRNA (guanine-N(1)-)-methyltransferase"/>
    <property type="match status" value="1"/>
</dbReference>
<dbReference type="FunFam" id="3.40.1280.10:FF:000001">
    <property type="entry name" value="tRNA (guanine-N(1)-)-methyltransferase"/>
    <property type="match status" value="1"/>
</dbReference>
<dbReference type="Gene3D" id="3.40.1280.10">
    <property type="match status" value="1"/>
</dbReference>
<dbReference type="Gene3D" id="1.10.1270.20">
    <property type="entry name" value="tRNA(m1g37)methyltransferase, domain 2"/>
    <property type="match status" value="1"/>
</dbReference>
<dbReference type="HAMAP" id="MF_00605">
    <property type="entry name" value="TrmD"/>
    <property type="match status" value="1"/>
</dbReference>
<dbReference type="InterPro" id="IPR029028">
    <property type="entry name" value="Alpha/beta_knot_MTases"/>
</dbReference>
<dbReference type="InterPro" id="IPR023148">
    <property type="entry name" value="tRNA_m1G_MeTrfase_C_sf"/>
</dbReference>
<dbReference type="InterPro" id="IPR002649">
    <property type="entry name" value="tRNA_m1G_MeTrfase_TrmD"/>
</dbReference>
<dbReference type="InterPro" id="IPR029026">
    <property type="entry name" value="tRNA_m1G_MTases_N"/>
</dbReference>
<dbReference type="InterPro" id="IPR016009">
    <property type="entry name" value="tRNA_MeTrfase_TRMD/TRM10"/>
</dbReference>
<dbReference type="NCBIfam" id="NF000648">
    <property type="entry name" value="PRK00026.1"/>
    <property type="match status" value="1"/>
</dbReference>
<dbReference type="NCBIfam" id="TIGR00088">
    <property type="entry name" value="trmD"/>
    <property type="match status" value="1"/>
</dbReference>
<dbReference type="PANTHER" id="PTHR46417">
    <property type="entry name" value="TRNA (GUANINE-N(1)-)-METHYLTRANSFERASE"/>
    <property type="match status" value="1"/>
</dbReference>
<dbReference type="PANTHER" id="PTHR46417:SF1">
    <property type="entry name" value="TRNA (GUANINE-N(1)-)-METHYLTRANSFERASE"/>
    <property type="match status" value="1"/>
</dbReference>
<dbReference type="Pfam" id="PF01746">
    <property type="entry name" value="tRNA_m1G_MT"/>
    <property type="match status" value="1"/>
</dbReference>
<dbReference type="PIRSF" id="PIRSF000386">
    <property type="entry name" value="tRNA_mtase"/>
    <property type="match status" value="1"/>
</dbReference>
<dbReference type="SUPFAM" id="SSF75217">
    <property type="entry name" value="alpha/beta knot"/>
    <property type="match status" value="1"/>
</dbReference>
<accession>Q5WZE2</accession>
<keyword id="KW-0963">Cytoplasm</keyword>
<keyword id="KW-0489">Methyltransferase</keyword>
<keyword id="KW-0949">S-adenosyl-L-methionine</keyword>
<keyword id="KW-0808">Transferase</keyword>
<keyword id="KW-0819">tRNA processing</keyword>
<name>TRMD_LEGPL</name>
<reference key="1">
    <citation type="journal article" date="2004" name="Nat. Genet.">
        <title>Evidence in the Legionella pneumophila genome for exploitation of host cell functions and high genome plasticity.</title>
        <authorList>
            <person name="Cazalet C."/>
            <person name="Rusniok C."/>
            <person name="Brueggemann H."/>
            <person name="Zidane N."/>
            <person name="Magnier A."/>
            <person name="Ma L."/>
            <person name="Tichit M."/>
            <person name="Jarraud S."/>
            <person name="Bouchier C."/>
            <person name="Vandenesch F."/>
            <person name="Kunst F."/>
            <person name="Etienne J."/>
            <person name="Glaser P."/>
            <person name="Buchrieser C."/>
        </authorList>
    </citation>
    <scope>NUCLEOTIDE SEQUENCE [LARGE SCALE GENOMIC DNA]</scope>
    <source>
        <strain>Lens</strain>
    </source>
</reference>